<sequence>MQNQRIRIRLKAFDHRLIDQSTAEIVETAKRTGAQVRGPIPLPTRKERFTVLISPHVNKDARDQYEIRTHKRLVDIVEPTEKTVDALMRLDLAAGVDVQISLG</sequence>
<evidence type="ECO:0000255" key="1">
    <source>
        <dbReference type="HAMAP-Rule" id="MF_00508"/>
    </source>
</evidence>
<evidence type="ECO:0000305" key="2"/>
<dbReference type="EMBL" id="CP001127">
    <property type="protein sequence ID" value="ACF92495.1"/>
    <property type="molecule type" value="Genomic_DNA"/>
</dbReference>
<dbReference type="RefSeq" id="WP_001181005.1">
    <property type="nucleotide sequence ID" value="NC_011094.1"/>
</dbReference>
<dbReference type="SMR" id="B4TXE3"/>
<dbReference type="GeneID" id="98390443"/>
<dbReference type="KEGG" id="sew:SeSA_A3637"/>
<dbReference type="HOGENOM" id="CLU_122625_1_3_6"/>
<dbReference type="Proteomes" id="UP000001865">
    <property type="component" value="Chromosome"/>
</dbReference>
<dbReference type="GO" id="GO:1990904">
    <property type="term" value="C:ribonucleoprotein complex"/>
    <property type="evidence" value="ECO:0007669"/>
    <property type="project" value="UniProtKB-KW"/>
</dbReference>
<dbReference type="GO" id="GO:0005840">
    <property type="term" value="C:ribosome"/>
    <property type="evidence" value="ECO:0007669"/>
    <property type="project" value="UniProtKB-KW"/>
</dbReference>
<dbReference type="GO" id="GO:0003735">
    <property type="term" value="F:structural constituent of ribosome"/>
    <property type="evidence" value="ECO:0007669"/>
    <property type="project" value="InterPro"/>
</dbReference>
<dbReference type="GO" id="GO:0000049">
    <property type="term" value="F:tRNA binding"/>
    <property type="evidence" value="ECO:0007669"/>
    <property type="project" value="UniProtKB-UniRule"/>
</dbReference>
<dbReference type="GO" id="GO:0006412">
    <property type="term" value="P:translation"/>
    <property type="evidence" value="ECO:0007669"/>
    <property type="project" value="UniProtKB-UniRule"/>
</dbReference>
<dbReference type="FunFam" id="3.30.70.600:FF:000001">
    <property type="entry name" value="30S ribosomal protein S10"/>
    <property type="match status" value="1"/>
</dbReference>
<dbReference type="Gene3D" id="3.30.70.600">
    <property type="entry name" value="Ribosomal protein S10 domain"/>
    <property type="match status" value="1"/>
</dbReference>
<dbReference type="HAMAP" id="MF_00508">
    <property type="entry name" value="Ribosomal_uS10"/>
    <property type="match status" value="1"/>
</dbReference>
<dbReference type="InterPro" id="IPR001848">
    <property type="entry name" value="Ribosomal_uS10"/>
</dbReference>
<dbReference type="InterPro" id="IPR018268">
    <property type="entry name" value="Ribosomal_uS10_CS"/>
</dbReference>
<dbReference type="InterPro" id="IPR027486">
    <property type="entry name" value="Ribosomal_uS10_dom"/>
</dbReference>
<dbReference type="InterPro" id="IPR036838">
    <property type="entry name" value="Ribosomal_uS10_dom_sf"/>
</dbReference>
<dbReference type="NCBIfam" id="NF001861">
    <property type="entry name" value="PRK00596.1"/>
    <property type="match status" value="1"/>
</dbReference>
<dbReference type="NCBIfam" id="TIGR01049">
    <property type="entry name" value="rpsJ_bact"/>
    <property type="match status" value="1"/>
</dbReference>
<dbReference type="PANTHER" id="PTHR11700">
    <property type="entry name" value="30S RIBOSOMAL PROTEIN S10 FAMILY MEMBER"/>
    <property type="match status" value="1"/>
</dbReference>
<dbReference type="Pfam" id="PF00338">
    <property type="entry name" value="Ribosomal_S10"/>
    <property type="match status" value="1"/>
</dbReference>
<dbReference type="PRINTS" id="PR00971">
    <property type="entry name" value="RIBOSOMALS10"/>
</dbReference>
<dbReference type="SMART" id="SM01403">
    <property type="entry name" value="Ribosomal_S10"/>
    <property type="match status" value="1"/>
</dbReference>
<dbReference type="SUPFAM" id="SSF54999">
    <property type="entry name" value="Ribosomal protein S10"/>
    <property type="match status" value="1"/>
</dbReference>
<dbReference type="PROSITE" id="PS00361">
    <property type="entry name" value="RIBOSOMAL_S10"/>
    <property type="match status" value="1"/>
</dbReference>
<name>RS10_SALSV</name>
<proteinExistence type="inferred from homology"/>
<keyword id="KW-0687">Ribonucleoprotein</keyword>
<keyword id="KW-0689">Ribosomal protein</keyword>
<protein>
    <recommendedName>
        <fullName evidence="1">Small ribosomal subunit protein uS10</fullName>
    </recommendedName>
    <alternativeName>
        <fullName evidence="2">30S ribosomal protein S10</fullName>
    </alternativeName>
</protein>
<feature type="chain" id="PRO_1000127182" description="Small ribosomal subunit protein uS10">
    <location>
        <begin position="1"/>
        <end position="103"/>
    </location>
</feature>
<comment type="function">
    <text evidence="1">Involved in the binding of tRNA to the ribosomes.</text>
</comment>
<comment type="subunit">
    <text evidence="1">Part of the 30S ribosomal subunit.</text>
</comment>
<comment type="similarity">
    <text evidence="1">Belongs to the universal ribosomal protein uS10 family.</text>
</comment>
<accession>B4TXE3</accession>
<gene>
    <name evidence="1" type="primary">rpsJ</name>
    <name type="ordered locus">SeSA_A3637</name>
</gene>
<reference key="1">
    <citation type="journal article" date="2011" name="J. Bacteriol.">
        <title>Comparative genomics of 28 Salmonella enterica isolates: evidence for CRISPR-mediated adaptive sublineage evolution.</title>
        <authorList>
            <person name="Fricke W.F."/>
            <person name="Mammel M.K."/>
            <person name="McDermott P.F."/>
            <person name="Tartera C."/>
            <person name="White D.G."/>
            <person name="Leclerc J.E."/>
            <person name="Ravel J."/>
            <person name="Cebula T.A."/>
        </authorList>
    </citation>
    <scope>NUCLEOTIDE SEQUENCE [LARGE SCALE GENOMIC DNA]</scope>
    <source>
        <strain>CVM19633</strain>
    </source>
</reference>
<organism>
    <name type="scientific">Salmonella schwarzengrund (strain CVM19633)</name>
    <dbReference type="NCBI Taxonomy" id="439843"/>
    <lineage>
        <taxon>Bacteria</taxon>
        <taxon>Pseudomonadati</taxon>
        <taxon>Pseudomonadota</taxon>
        <taxon>Gammaproteobacteria</taxon>
        <taxon>Enterobacterales</taxon>
        <taxon>Enterobacteriaceae</taxon>
        <taxon>Salmonella</taxon>
    </lineage>
</organism>